<accession>Q9ZCX7</accession>
<evidence type="ECO:0000255" key="1">
    <source>
        <dbReference type="HAMAP-Rule" id="MF_01382"/>
    </source>
</evidence>
<sequence>MLSILKKLFGTANDRTVKKLFSEITKINSFEPAIKILSDAALKNKTVEFKEKLKNGATLDDILYEAFAVVREAASRVCGMRHFDVQLIGGIILHRGMIAEMRTGEGKTLVATLPAYLNALTEKGVHVVTVNDYLALRDSASMGKIYNFLGLSVGCIVAGMTDEAKRIAYNSDITHATNNELGFDYLRDNMKYSMQERVLRPFNFAIIDEVDSILIDEARTPIVISGPVNDNSALYGKIDKIVRLLNVSDFEKDEKLKTINLTEAGITHIESLLIKDGIIKPDTGLYDFENLNLVHYVNQALRAHHMFTIDVDYLVREGKVMIIDEFTGRVMEGRRYSEGLHQALEAKENVKIQNENQTLASITFQNYFRNYPKLAGMTGTSMTEASELKDIYNLDVVAVPTHNKVTRIDLDDEIYGSKQEKYDAILKLIKDCYNRGQPILVGTISIEKSEELSSILNKEKIPHKVLNAKFHEQEAFIIAQAGRFKAVTIATNMAGRGTDIMLGGNPEMLIEQFNKDHNYVAKTAEIKAQIAEEKQKVIETGGLFVIGTERHESRRIDNQLRGRSGRQGDPGKTQFFLSLDDDLMRIFASDRISGVLRTLGLKDGEAIHHPMISRSLEKAQQKVEEYNYEMRKNLLRFDDVMNDQRKIIYEQRTEIIKSKDSYGFLTSATEELAKKIVLTFIPVGSYREDWDIENLTVELHRIFSIKFDHNLVNKNDVTEEDITKLVIQMAHDIYKSKEEAYSSELMHNAVKYILLTTLDQVWKDHLYSLDHLRQGISLRAYAQKDPLSEYKREAFNLFEQMLNNLKELFIQTVYHFHIDLKHLQKEDISLEHKKLQKNMRESREDPAFSKYNAGNSIETYLKPVVSRVDPKDRKPDDPMSWGRVSRNELCPCGSGKKYKYCHGVNE</sequence>
<keyword id="KW-0067">ATP-binding</keyword>
<keyword id="KW-0997">Cell inner membrane</keyword>
<keyword id="KW-1003">Cell membrane</keyword>
<keyword id="KW-0963">Cytoplasm</keyword>
<keyword id="KW-0472">Membrane</keyword>
<keyword id="KW-0479">Metal-binding</keyword>
<keyword id="KW-0547">Nucleotide-binding</keyword>
<keyword id="KW-0653">Protein transport</keyword>
<keyword id="KW-1185">Reference proteome</keyword>
<keyword id="KW-1278">Translocase</keyword>
<keyword id="KW-0811">Translocation</keyword>
<keyword id="KW-0813">Transport</keyword>
<keyword id="KW-0862">Zinc</keyword>
<comment type="function">
    <text evidence="1">Part of the Sec protein translocase complex. Interacts with the SecYEG preprotein conducting channel. Has a central role in coupling the hydrolysis of ATP to the transfer of proteins into and across the cell membrane, serving both as a receptor for the preprotein-SecB complex and as an ATP-driven molecular motor driving the stepwise translocation of polypeptide chains across the membrane.</text>
</comment>
<comment type="catalytic activity">
    <reaction evidence="1">
        <text>ATP + H2O + cellular proteinSide 1 = ADP + phosphate + cellular proteinSide 2.</text>
        <dbReference type="EC" id="7.4.2.8"/>
    </reaction>
</comment>
<comment type="cofactor">
    <cofactor evidence="1">
        <name>Zn(2+)</name>
        <dbReference type="ChEBI" id="CHEBI:29105"/>
    </cofactor>
    <text evidence="1">May bind 1 zinc ion per subunit.</text>
</comment>
<comment type="subunit">
    <text evidence="1">Monomer and homodimer. Part of the essential Sec protein translocation apparatus which comprises SecA, SecYEG and auxiliary proteins SecDF-YajC and YidC.</text>
</comment>
<comment type="subcellular location">
    <subcellularLocation>
        <location evidence="1">Cell inner membrane</location>
        <topology evidence="1">Peripheral membrane protein</topology>
        <orientation evidence="1">Cytoplasmic side</orientation>
    </subcellularLocation>
    <subcellularLocation>
        <location evidence="1">Cytoplasm</location>
    </subcellularLocation>
    <text evidence="1">Distribution is 50-50.</text>
</comment>
<comment type="similarity">
    <text evidence="1">Belongs to the SecA family.</text>
</comment>
<feature type="chain" id="PRO_0000109601" description="Protein translocase subunit SecA">
    <location>
        <begin position="1"/>
        <end position="906"/>
    </location>
</feature>
<feature type="binding site" evidence="1">
    <location>
        <position position="86"/>
    </location>
    <ligand>
        <name>ATP</name>
        <dbReference type="ChEBI" id="CHEBI:30616"/>
    </ligand>
</feature>
<feature type="binding site" evidence="1">
    <location>
        <begin position="104"/>
        <end position="108"/>
    </location>
    <ligand>
        <name>ATP</name>
        <dbReference type="ChEBI" id="CHEBI:30616"/>
    </ligand>
</feature>
<feature type="binding site" evidence="1">
    <location>
        <position position="499"/>
    </location>
    <ligand>
        <name>ATP</name>
        <dbReference type="ChEBI" id="CHEBI:30616"/>
    </ligand>
</feature>
<feature type="binding site" evidence="1">
    <location>
        <position position="890"/>
    </location>
    <ligand>
        <name>Zn(2+)</name>
        <dbReference type="ChEBI" id="CHEBI:29105"/>
    </ligand>
</feature>
<feature type="binding site" evidence="1">
    <location>
        <position position="892"/>
    </location>
    <ligand>
        <name>Zn(2+)</name>
        <dbReference type="ChEBI" id="CHEBI:29105"/>
    </ligand>
</feature>
<feature type="binding site" evidence="1">
    <location>
        <position position="901"/>
    </location>
    <ligand>
        <name>Zn(2+)</name>
        <dbReference type="ChEBI" id="CHEBI:29105"/>
    </ligand>
</feature>
<feature type="binding site" evidence="1">
    <location>
        <position position="902"/>
    </location>
    <ligand>
        <name>Zn(2+)</name>
        <dbReference type="ChEBI" id="CHEBI:29105"/>
    </ligand>
</feature>
<organism>
    <name type="scientific">Rickettsia prowazekii (strain Madrid E)</name>
    <dbReference type="NCBI Taxonomy" id="272947"/>
    <lineage>
        <taxon>Bacteria</taxon>
        <taxon>Pseudomonadati</taxon>
        <taxon>Pseudomonadota</taxon>
        <taxon>Alphaproteobacteria</taxon>
        <taxon>Rickettsiales</taxon>
        <taxon>Rickettsiaceae</taxon>
        <taxon>Rickettsieae</taxon>
        <taxon>Rickettsia</taxon>
        <taxon>typhus group</taxon>
    </lineage>
</organism>
<protein>
    <recommendedName>
        <fullName evidence="1">Protein translocase subunit SecA</fullName>
        <ecNumber evidence="1">7.4.2.8</ecNumber>
    </recommendedName>
</protein>
<proteinExistence type="inferred from homology"/>
<gene>
    <name evidence="1" type="primary">secA</name>
    <name type="ordered locus">RP575</name>
</gene>
<reference key="1">
    <citation type="journal article" date="1998" name="Nature">
        <title>The genome sequence of Rickettsia prowazekii and the origin of mitochondria.</title>
        <authorList>
            <person name="Andersson S.G.E."/>
            <person name="Zomorodipour A."/>
            <person name="Andersson J.O."/>
            <person name="Sicheritz-Ponten T."/>
            <person name="Alsmark U.C.M."/>
            <person name="Podowski R.M."/>
            <person name="Naeslund A.K."/>
            <person name="Eriksson A.-S."/>
            <person name="Winkler H.H."/>
            <person name="Kurland C.G."/>
        </authorList>
    </citation>
    <scope>NUCLEOTIDE SEQUENCE [LARGE SCALE GENOMIC DNA]</scope>
    <source>
        <strain>Madrid E</strain>
    </source>
</reference>
<reference key="2">
    <citation type="journal article" date="1999" name="Biochemistry (Mosc.)">
        <title>Nucleotide sequence of the gene and features of the major outer membrane protein of a virulent Rickettsia prowazekii strain.</title>
        <authorList>
            <person name="Emelyanov V.V."/>
            <person name="Demyanova N.G."/>
        </authorList>
    </citation>
    <scope>NUCLEOTIDE SEQUENCE [GENOMIC DNA] OF 1-79</scope>
    <source>
        <strain>ATCC VR-142 / Breinl</strain>
    </source>
</reference>
<name>SECA_RICPR</name>
<dbReference type="EC" id="7.4.2.8" evidence="1"/>
<dbReference type="EMBL" id="AJ235272">
    <property type="protein sequence ID" value="CAA15022.1"/>
    <property type="molecule type" value="Genomic_DNA"/>
</dbReference>
<dbReference type="EMBL" id="X89470">
    <property type="protein sequence ID" value="CAA61658.1"/>
    <property type="molecule type" value="Genomic_DNA"/>
</dbReference>
<dbReference type="PIR" id="D71662">
    <property type="entry name" value="D71662"/>
</dbReference>
<dbReference type="RefSeq" id="NP_220946.1">
    <property type="nucleotide sequence ID" value="NC_000963.1"/>
</dbReference>
<dbReference type="RefSeq" id="WP_004599014.1">
    <property type="nucleotide sequence ID" value="NC_000963.1"/>
</dbReference>
<dbReference type="SMR" id="Q9ZCX7"/>
<dbReference type="STRING" id="272947.gene:17555655"/>
<dbReference type="EnsemblBacteria" id="CAA15022">
    <property type="protein sequence ID" value="CAA15022"/>
    <property type="gene ID" value="CAA15022"/>
</dbReference>
<dbReference type="GeneID" id="57569701"/>
<dbReference type="KEGG" id="rpr:RP575"/>
<dbReference type="PATRIC" id="fig|272947.5.peg.592"/>
<dbReference type="eggNOG" id="COG0653">
    <property type="taxonomic scope" value="Bacteria"/>
</dbReference>
<dbReference type="HOGENOM" id="CLU_005314_3_0_5"/>
<dbReference type="OrthoDB" id="9805579at2"/>
<dbReference type="Proteomes" id="UP000002480">
    <property type="component" value="Chromosome"/>
</dbReference>
<dbReference type="GO" id="GO:0031522">
    <property type="term" value="C:cell envelope Sec protein transport complex"/>
    <property type="evidence" value="ECO:0007669"/>
    <property type="project" value="TreeGrafter"/>
</dbReference>
<dbReference type="GO" id="GO:0005829">
    <property type="term" value="C:cytosol"/>
    <property type="evidence" value="ECO:0007669"/>
    <property type="project" value="TreeGrafter"/>
</dbReference>
<dbReference type="GO" id="GO:0005886">
    <property type="term" value="C:plasma membrane"/>
    <property type="evidence" value="ECO:0007669"/>
    <property type="project" value="UniProtKB-SubCell"/>
</dbReference>
<dbReference type="GO" id="GO:0005524">
    <property type="term" value="F:ATP binding"/>
    <property type="evidence" value="ECO:0007669"/>
    <property type="project" value="UniProtKB-UniRule"/>
</dbReference>
<dbReference type="GO" id="GO:0046872">
    <property type="term" value="F:metal ion binding"/>
    <property type="evidence" value="ECO:0007669"/>
    <property type="project" value="UniProtKB-KW"/>
</dbReference>
<dbReference type="GO" id="GO:0008564">
    <property type="term" value="F:protein-exporting ATPase activity"/>
    <property type="evidence" value="ECO:0007669"/>
    <property type="project" value="UniProtKB-EC"/>
</dbReference>
<dbReference type="GO" id="GO:0065002">
    <property type="term" value="P:intracellular protein transmembrane transport"/>
    <property type="evidence" value="ECO:0007669"/>
    <property type="project" value="UniProtKB-UniRule"/>
</dbReference>
<dbReference type="GO" id="GO:0017038">
    <property type="term" value="P:protein import"/>
    <property type="evidence" value="ECO:0007669"/>
    <property type="project" value="InterPro"/>
</dbReference>
<dbReference type="GO" id="GO:0006605">
    <property type="term" value="P:protein targeting"/>
    <property type="evidence" value="ECO:0007669"/>
    <property type="project" value="UniProtKB-UniRule"/>
</dbReference>
<dbReference type="GO" id="GO:0043952">
    <property type="term" value="P:protein transport by the Sec complex"/>
    <property type="evidence" value="ECO:0007669"/>
    <property type="project" value="TreeGrafter"/>
</dbReference>
<dbReference type="CDD" id="cd17928">
    <property type="entry name" value="DEXDc_SecA"/>
    <property type="match status" value="1"/>
</dbReference>
<dbReference type="CDD" id="cd18803">
    <property type="entry name" value="SF2_C_secA"/>
    <property type="match status" value="1"/>
</dbReference>
<dbReference type="FunFam" id="3.40.50.300:FF:000113">
    <property type="entry name" value="Preprotein translocase subunit SecA"/>
    <property type="match status" value="1"/>
</dbReference>
<dbReference type="FunFam" id="3.90.1440.10:FF:000001">
    <property type="entry name" value="Preprotein translocase subunit SecA"/>
    <property type="match status" value="1"/>
</dbReference>
<dbReference type="FunFam" id="1.10.3060.10:FF:000003">
    <property type="entry name" value="Protein translocase subunit SecA"/>
    <property type="match status" value="1"/>
</dbReference>
<dbReference type="Gene3D" id="1.10.3060.10">
    <property type="entry name" value="Helical scaffold and wing domains of SecA"/>
    <property type="match status" value="1"/>
</dbReference>
<dbReference type="Gene3D" id="3.40.50.300">
    <property type="entry name" value="P-loop containing nucleotide triphosphate hydrolases"/>
    <property type="match status" value="2"/>
</dbReference>
<dbReference type="Gene3D" id="3.90.1440.10">
    <property type="entry name" value="SecA, preprotein cross-linking domain"/>
    <property type="match status" value="1"/>
</dbReference>
<dbReference type="HAMAP" id="MF_01382">
    <property type="entry name" value="SecA"/>
    <property type="match status" value="1"/>
</dbReference>
<dbReference type="InterPro" id="IPR014001">
    <property type="entry name" value="Helicase_ATP-bd"/>
</dbReference>
<dbReference type="InterPro" id="IPR001650">
    <property type="entry name" value="Helicase_C-like"/>
</dbReference>
<dbReference type="InterPro" id="IPR027417">
    <property type="entry name" value="P-loop_NTPase"/>
</dbReference>
<dbReference type="InterPro" id="IPR004027">
    <property type="entry name" value="SEC_C_motif"/>
</dbReference>
<dbReference type="InterPro" id="IPR000185">
    <property type="entry name" value="SecA"/>
</dbReference>
<dbReference type="InterPro" id="IPR020937">
    <property type="entry name" value="SecA_CS"/>
</dbReference>
<dbReference type="InterPro" id="IPR011115">
    <property type="entry name" value="SecA_DEAD"/>
</dbReference>
<dbReference type="InterPro" id="IPR014018">
    <property type="entry name" value="SecA_motor_DEAD"/>
</dbReference>
<dbReference type="InterPro" id="IPR011130">
    <property type="entry name" value="SecA_preprotein_X-link_dom"/>
</dbReference>
<dbReference type="InterPro" id="IPR044722">
    <property type="entry name" value="SecA_SF2_C"/>
</dbReference>
<dbReference type="InterPro" id="IPR011116">
    <property type="entry name" value="SecA_Wing/Scaffold"/>
</dbReference>
<dbReference type="InterPro" id="IPR036266">
    <property type="entry name" value="SecA_Wing/Scaffold_sf"/>
</dbReference>
<dbReference type="InterPro" id="IPR036670">
    <property type="entry name" value="SecA_X-link_sf"/>
</dbReference>
<dbReference type="NCBIfam" id="NF009538">
    <property type="entry name" value="PRK12904.1"/>
    <property type="match status" value="1"/>
</dbReference>
<dbReference type="NCBIfam" id="TIGR00963">
    <property type="entry name" value="secA"/>
    <property type="match status" value="1"/>
</dbReference>
<dbReference type="PANTHER" id="PTHR30612:SF0">
    <property type="entry name" value="CHLOROPLAST PROTEIN-TRANSPORTING ATPASE"/>
    <property type="match status" value="1"/>
</dbReference>
<dbReference type="PANTHER" id="PTHR30612">
    <property type="entry name" value="SECA INNER MEMBRANE COMPONENT OF SEC PROTEIN SECRETION SYSTEM"/>
    <property type="match status" value="1"/>
</dbReference>
<dbReference type="Pfam" id="PF21090">
    <property type="entry name" value="P-loop_SecA"/>
    <property type="match status" value="1"/>
</dbReference>
<dbReference type="Pfam" id="PF02810">
    <property type="entry name" value="SEC-C"/>
    <property type="match status" value="1"/>
</dbReference>
<dbReference type="Pfam" id="PF07517">
    <property type="entry name" value="SecA_DEAD"/>
    <property type="match status" value="1"/>
</dbReference>
<dbReference type="Pfam" id="PF01043">
    <property type="entry name" value="SecA_PP_bind"/>
    <property type="match status" value="1"/>
</dbReference>
<dbReference type="Pfam" id="PF07516">
    <property type="entry name" value="SecA_SW"/>
    <property type="match status" value="1"/>
</dbReference>
<dbReference type="PRINTS" id="PR00906">
    <property type="entry name" value="SECA"/>
</dbReference>
<dbReference type="SMART" id="SM00957">
    <property type="entry name" value="SecA_DEAD"/>
    <property type="match status" value="1"/>
</dbReference>
<dbReference type="SMART" id="SM00958">
    <property type="entry name" value="SecA_PP_bind"/>
    <property type="match status" value="1"/>
</dbReference>
<dbReference type="SUPFAM" id="SSF81886">
    <property type="entry name" value="Helical scaffold and wing domains of SecA"/>
    <property type="match status" value="1"/>
</dbReference>
<dbReference type="SUPFAM" id="SSF52540">
    <property type="entry name" value="P-loop containing nucleoside triphosphate hydrolases"/>
    <property type="match status" value="2"/>
</dbReference>
<dbReference type="SUPFAM" id="SSF81767">
    <property type="entry name" value="Pre-protein crosslinking domain of SecA"/>
    <property type="match status" value="1"/>
</dbReference>
<dbReference type="PROSITE" id="PS01312">
    <property type="entry name" value="SECA"/>
    <property type="match status" value="1"/>
</dbReference>
<dbReference type="PROSITE" id="PS51196">
    <property type="entry name" value="SECA_MOTOR_DEAD"/>
    <property type="match status" value="1"/>
</dbReference>